<protein>
    <recommendedName>
        <fullName>Protein CASP</fullName>
    </recommendedName>
</protein>
<reference key="1">
    <citation type="journal article" date="1997" name="Gene">
        <title>CASP, a novel, highly conserved alternative-splicing product of the CDP/cut/cux gene, lacks cut-repeat and homeo DNA-binding domains, and interacts with full-length CDP in vitro.</title>
        <authorList>
            <person name="Lievens P.M.-J."/>
            <person name="Tufarelli C."/>
            <person name="Donady J.J."/>
            <person name="Stagg A."/>
            <person name="Neufeld E.J."/>
        </authorList>
    </citation>
    <scope>NUCLEOTIDE SEQUENCE [MRNA]</scope>
    <scope>TISSUE SPECIFICITY</scope>
</reference>
<reference key="2">
    <citation type="journal article" date="2004" name="Genome Res.">
        <title>The status, quality, and expansion of the NIH full-length cDNA project: the Mammalian Gene Collection (MGC).</title>
        <authorList>
            <consortium name="The MGC Project Team"/>
        </authorList>
    </citation>
    <scope>NUCLEOTIDE SEQUENCE [LARGE SCALE MRNA]</scope>
    <source>
        <tissue>Colon</tissue>
        <tissue>Eye</tissue>
    </source>
</reference>
<reference key="3">
    <citation type="journal article" date="2010" name="Cell">
        <title>A tissue-specific atlas of mouse protein phosphorylation and expression.</title>
        <authorList>
            <person name="Huttlin E.L."/>
            <person name="Jedrychowski M.P."/>
            <person name="Elias J.E."/>
            <person name="Goswami T."/>
            <person name="Rad R."/>
            <person name="Beausoleil S.A."/>
            <person name="Villen J."/>
            <person name="Haas W."/>
            <person name="Sowa M.E."/>
            <person name="Gygi S.P."/>
        </authorList>
    </citation>
    <scope>IDENTIFICATION BY MASS SPECTROMETRY [LARGE SCALE ANALYSIS]</scope>
    <source>
        <tissue>Kidney</tissue>
        <tissue>Pancreas</tissue>
        <tissue>Spleen</tissue>
    </source>
</reference>
<keyword id="KW-0025">Alternative splicing</keyword>
<keyword id="KW-0175">Coiled coil</keyword>
<keyword id="KW-1015">Disulfide bond</keyword>
<keyword id="KW-0333">Golgi apparatus</keyword>
<keyword id="KW-0472">Membrane</keyword>
<keyword id="KW-0597">Phosphoprotein</keyword>
<keyword id="KW-1185">Reference proteome</keyword>
<keyword id="KW-0812">Transmembrane</keyword>
<keyword id="KW-1133">Transmembrane helix</keyword>
<keyword id="KW-0813">Transport</keyword>
<sequence length="678" mass="77269">MAANVGSMSQYWKRFDLQQLQRELDAAATVLANRQDESEQSRKRLIEQSREFKKNTPEDLRKQVAPLLKSFQGEIDALSKRSKEAEAAFLTVYKRLIDVPDPVPALDVGQQLEIKVQRLHDIETENQKLRETLEEYNKEFAEVKNQEVTIKALKEKIREYEQTLKSQAETIALEKEQKLQNDFAEKERKLQETQMSTTSKLEEAEHKLQTLQTALEKTRTELFDLKTKYDEETTAKADEIEMIMTDLERANQRAEVAQREAETLREQLSSANHSLQLASQIQKAPDVEQAIEVLTRSSLEVELAAKEREIAQLVEDVQRLQASLTKLRENSASQISQLEQQLNAKNSTLKQLEEKLKGQADYEEVKKELNTLKSMEFAPSEGAGTQDSTKPLEVLLLEKNRSLQSENATLRISNSDLSGRCAELQIHLTEATAKAVEQKELIARLEQDLSTIQSIQRPDAEGASEQGLEKIPEPIKEATALFYGPSMSSSGTLPEGQVDSLLSIISSQRERFRTRNQELEAESRMAQHTIQALQSELDSLRADNIKLFEKIKFLQSYPGRGIGSDDTELRYSSQYEERLDPFSSFSKRERQRKYLGLSPWDKATLGMGRLILSNKTARTIGFFYTLFLHCLVFLVLYKLAWSESVERDCAATCAKKFADHLHKFHESDNGAAAGDLWQ</sequence>
<dbReference type="EMBL" id="U68542">
    <property type="protein sequence ID" value="AAB08430.1"/>
    <property type="molecule type" value="mRNA"/>
</dbReference>
<dbReference type="EMBL" id="BC014289">
    <property type="protein sequence ID" value="AAH14289.1"/>
    <property type="molecule type" value="mRNA"/>
</dbReference>
<dbReference type="EMBL" id="BC054370">
    <property type="protein sequence ID" value="AAH54370.1"/>
    <property type="molecule type" value="mRNA"/>
</dbReference>
<dbReference type="CCDS" id="CCDS71685.1">
    <molecule id="P70403-1"/>
</dbReference>
<dbReference type="SMR" id="P70403"/>
<dbReference type="iPTMnet" id="P70403"/>
<dbReference type="PeptideAtlas" id="P70403"/>
<dbReference type="ProteomicsDB" id="279916">
    <molecule id="P70403-1"/>
</dbReference>
<dbReference type="Pumba" id="P70403"/>
<dbReference type="AGR" id="MGI:88568"/>
<dbReference type="MGI" id="MGI:88568">
    <property type="gene designation" value="Cux1"/>
</dbReference>
<dbReference type="eggNOG" id="KOG0963">
    <property type="taxonomic scope" value="Eukaryota"/>
</dbReference>
<dbReference type="eggNOG" id="KOG2252">
    <property type="taxonomic scope" value="Eukaryota"/>
</dbReference>
<dbReference type="ChiTaRS" id="Cux1">
    <property type="organism name" value="mouse"/>
</dbReference>
<dbReference type="Proteomes" id="UP000000589">
    <property type="component" value="Unplaced"/>
</dbReference>
<dbReference type="GO" id="GO:0005737">
    <property type="term" value="C:cytoplasm"/>
    <property type="evidence" value="ECO:0000314"/>
    <property type="project" value="MGI"/>
</dbReference>
<dbReference type="GO" id="GO:0000139">
    <property type="term" value="C:Golgi membrane"/>
    <property type="evidence" value="ECO:0007669"/>
    <property type="project" value="UniProtKB-SubCell"/>
</dbReference>
<dbReference type="GO" id="GO:0043005">
    <property type="term" value="C:neuron projection"/>
    <property type="evidence" value="ECO:0000314"/>
    <property type="project" value="MGI"/>
</dbReference>
<dbReference type="GO" id="GO:0005634">
    <property type="term" value="C:nucleus"/>
    <property type="evidence" value="ECO:0000314"/>
    <property type="project" value="MGI"/>
</dbReference>
<dbReference type="GO" id="GO:0003682">
    <property type="term" value="F:chromatin binding"/>
    <property type="evidence" value="ECO:0000314"/>
    <property type="project" value="MGI"/>
</dbReference>
<dbReference type="GO" id="GO:0003677">
    <property type="term" value="F:DNA binding"/>
    <property type="evidence" value="ECO:0000314"/>
    <property type="project" value="MGI"/>
</dbReference>
<dbReference type="GO" id="GO:0000978">
    <property type="term" value="F:RNA polymerase II cis-regulatory region sequence-specific DNA binding"/>
    <property type="evidence" value="ECO:0000314"/>
    <property type="project" value="MGI"/>
</dbReference>
<dbReference type="GO" id="GO:0043565">
    <property type="term" value="F:sequence-specific DNA binding"/>
    <property type="evidence" value="ECO:0000314"/>
    <property type="project" value="MGI"/>
</dbReference>
<dbReference type="GO" id="GO:0042491">
    <property type="term" value="P:inner ear auditory receptor cell differentiation"/>
    <property type="evidence" value="ECO:0000315"/>
    <property type="project" value="MGI"/>
</dbReference>
<dbReference type="GO" id="GO:0006891">
    <property type="term" value="P:intra-Golgi vesicle-mediated transport"/>
    <property type="evidence" value="ECO:0007669"/>
    <property type="project" value="InterPro"/>
</dbReference>
<dbReference type="GO" id="GO:0001822">
    <property type="term" value="P:kidney development"/>
    <property type="evidence" value="ECO:0000316"/>
    <property type="project" value="MGI"/>
</dbReference>
<dbReference type="GO" id="GO:0030324">
    <property type="term" value="P:lung development"/>
    <property type="evidence" value="ECO:0000315"/>
    <property type="project" value="MGI"/>
</dbReference>
<dbReference type="GO" id="GO:0000122">
    <property type="term" value="P:negative regulation of transcription by RNA polymerase II"/>
    <property type="evidence" value="ECO:0000314"/>
    <property type="project" value="MGI"/>
</dbReference>
<dbReference type="Gene3D" id="1.20.5.1700">
    <property type="match status" value="1"/>
</dbReference>
<dbReference type="InterPro" id="IPR012955">
    <property type="entry name" value="CASP_C"/>
</dbReference>
<dbReference type="PANTHER" id="PTHR14043">
    <property type="entry name" value="CCAAT DISPLACEMENT PROTEIN-RELATED"/>
    <property type="match status" value="1"/>
</dbReference>
<dbReference type="PANTHER" id="PTHR14043:SF15">
    <property type="entry name" value="PROTEIN CASP"/>
    <property type="match status" value="1"/>
</dbReference>
<dbReference type="Pfam" id="PF08172">
    <property type="entry name" value="CASP_C"/>
    <property type="match status" value="1"/>
</dbReference>
<dbReference type="Pfam" id="PF25398">
    <property type="entry name" value="CUX1_N"/>
    <property type="match status" value="1"/>
</dbReference>
<proteinExistence type="evidence at protein level"/>
<evidence type="ECO:0000250" key="1"/>
<evidence type="ECO:0000250" key="2">
    <source>
        <dbReference type="UniProtKB" id="Q13948"/>
    </source>
</evidence>
<evidence type="ECO:0000255" key="3"/>
<evidence type="ECO:0000269" key="4">
    <source>
    </source>
</evidence>
<evidence type="ECO:0000305" key="5"/>
<comment type="function">
    <text evidence="1">May be involved in intra-Golgi retrograde transport.</text>
</comment>
<comment type="subunit">
    <text evidence="1">Homodimer; disulfide-linked. Interacts with GOLGA5 (By similarity).</text>
</comment>
<comment type="subcellular location">
    <subcellularLocation>
        <location evidence="1">Golgi apparatus membrane</location>
        <topology evidence="1">Single-pass type IV membrane protein</topology>
    </subcellularLocation>
</comment>
<comment type="alternative products">
    <event type="alternative splicing"/>
    <isoform>
        <id>P70403-1</id>
        <name>1</name>
        <name>CASP</name>
        <sequence type="displayed"/>
    </isoform>
    <isoform>
        <id>P53564-1</id>
        <name>5</name>
        <sequence type="external"/>
    </isoform>
    <isoform>
        <id>P53564-2</id>
        <name>2</name>
        <sequence type="external"/>
    </isoform>
    <isoform>
        <id>P53564-3</id>
        <name>3</name>
        <sequence type="external"/>
    </isoform>
    <isoform>
        <id>P53564-4</id>
        <name>4</name>
        <sequence type="external"/>
    </isoform>
    <isoform>
        <id>P53564-5</id>
        <name>6</name>
        <sequence type="external"/>
    </isoform>
</comment>
<comment type="tissue specificity">
    <text evidence="4">Ubiquitously expressed.</text>
</comment>
<comment type="similarity">
    <text evidence="5">Belongs to the CASP family.</text>
</comment>
<organism>
    <name type="scientific">Mus musculus</name>
    <name type="common">Mouse</name>
    <dbReference type="NCBI Taxonomy" id="10090"/>
    <lineage>
        <taxon>Eukaryota</taxon>
        <taxon>Metazoa</taxon>
        <taxon>Chordata</taxon>
        <taxon>Craniata</taxon>
        <taxon>Vertebrata</taxon>
        <taxon>Euteleostomi</taxon>
        <taxon>Mammalia</taxon>
        <taxon>Eutheria</taxon>
        <taxon>Euarchontoglires</taxon>
        <taxon>Glires</taxon>
        <taxon>Rodentia</taxon>
        <taxon>Myomorpha</taxon>
        <taxon>Muroidea</taxon>
        <taxon>Muridae</taxon>
        <taxon>Murinae</taxon>
        <taxon>Mus</taxon>
        <taxon>Mus</taxon>
    </lineage>
</organism>
<name>CASP_MOUSE</name>
<accession>P70403</accession>
<accession>Q7TQJ4</accession>
<accession>Q91WN6</accession>
<feature type="chain" id="PRO_0000071791" description="Protein CASP">
    <location>
        <begin position="1"/>
        <end position="678"/>
    </location>
</feature>
<feature type="topological domain" description="Cytoplasmic" evidence="3">
    <location>
        <begin position="1"/>
        <end position="619"/>
    </location>
</feature>
<feature type="transmembrane region" description="Helical; Anchor for type IV membrane protein" evidence="3">
    <location>
        <begin position="620"/>
        <end position="640"/>
    </location>
</feature>
<feature type="topological domain" description="Lumenal" evidence="3">
    <location>
        <begin position="641"/>
        <end position="678"/>
    </location>
</feature>
<feature type="coiled-coil region" evidence="3">
    <location>
        <begin position="16"/>
        <end position="40"/>
    </location>
</feature>
<feature type="coiled-coil region" evidence="3">
    <location>
        <begin position="67"/>
        <end position="374"/>
    </location>
</feature>
<feature type="coiled-coil region" evidence="3">
    <location>
        <begin position="427"/>
        <end position="454"/>
    </location>
</feature>
<feature type="coiled-coil region" evidence="3">
    <location>
        <begin position="502"/>
        <end position="556"/>
    </location>
</feature>
<feature type="modified residue" description="Phosphoserine" evidence="2">
    <location>
        <position position="586"/>
    </location>
</feature>
<feature type="sequence conflict" description="In Ref. 2; AAH14289." evidence="5" ref="2">
    <original>S</original>
    <variation>F</variation>
    <location>
        <position position="9"/>
    </location>
</feature>
<feature type="sequence conflict" description="In Ref. 2; AAH14289/AAH54370." evidence="5" ref="2">
    <original>A</original>
    <variation>T</variation>
    <location>
        <position position="27"/>
    </location>
</feature>
<feature type="sequence conflict" description="In Ref. 1; AAB08430 and 2; AAH54370." evidence="5" ref="1 2">
    <location>
        <begin position="288"/>
        <end position="289"/>
    </location>
</feature>
<feature type="sequence conflict" description="In Ref. 2; AAH54370." evidence="5" ref="2">
    <original>T</original>
    <variation>M</variation>
    <location>
        <position position="616"/>
    </location>
</feature>
<feature type="sequence conflict" description="In Ref. 2; AAH54370." evidence="5" ref="2">
    <original>G</original>
    <variation>S</variation>
    <location>
        <position position="621"/>
    </location>
</feature>
<gene>
    <name type="primary">Cux1</name>
    <name type="synonym">Cutl1</name>
</gene>